<evidence type="ECO:0000255" key="1">
    <source>
        <dbReference type="HAMAP-Rule" id="MF_00048"/>
    </source>
</evidence>
<dbReference type="EMBL" id="CR954246">
    <property type="protein sequence ID" value="CAI87571.1"/>
    <property type="molecule type" value="Genomic_DNA"/>
</dbReference>
<dbReference type="SMR" id="Q3IG11"/>
<dbReference type="STRING" id="326442.PSHAa2523"/>
<dbReference type="KEGG" id="pha:PSHAa2523"/>
<dbReference type="PATRIC" id="fig|326442.8.peg.2433"/>
<dbReference type="eggNOG" id="COG0792">
    <property type="taxonomic scope" value="Bacteria"/>
</dbReference>
<dbReference type="HOGENOM" id="CLU_115353_1_1_6"/>
<dbReference type="BioCyc" id="PHAL326442:PSHA_RS12425-MONOMER"/>
<dbReference type="Proteomes" id="UP000006843">
    <property type="component" value="Chromosome I"/>
</dbReference>
<dbReference type="GO" id="GO:0003676">
    <property type="term" value="F:nucleic acid binding"/>
    <property type="evidence" value="ECO:0007669"/>
    <property type="project" value="InterPro"/>
</dbReference>
<dbReference type="Gene3D" id="3.40.1350.10">
    <property type="match status" value="1"/>
</dbReference>
<dbReference type="HAMAP" id="MF_00048">
    <property type="entry name" value="UPF0102"/>
    <property type="match status" value="1"/>
</dbReference>
<dbReference type="InterPro" id="IPR011335">
    <property type="entry name" value="Restrct_endonuc-II-like"/>
</dbReference>
<dbReference type="InterPro" id="IPR011856">
    <property type="entry name" value="tRNA_endonuc-like_dom_sf"/>
</dbReference>
<dbReference type="InterPro" id="IPR003509">
    <property type="entry name" value="UPF0102_YraN-like"/>
</dbReference>
<dbReference type="NCBIfam" id="NF009150">
    <property type="entry name" value="PRK12497.1-3"/>
    <property type="match status" value="1"/>
</dbReference>
<dbReference type="NCBIfam" id="TIGR00252">
    <property type="entry name" value="YraN family protein"/>
    <property type="match status" value="1"/>
</dbReference>
<dbReference type="PANTHER" id="PTHR34039">
    <property type="entry name" value="UPF0102 PROTEIN YRAN"/>
    <property type="match status" value="1"/>
</dbReference>
<dbReference type="PANTHER" id="PTHR34039:SF1">
    <property type="entry name" value="UPF0102 PROTEIN YRAN"/>
    <property type="match status" value="1"/>
</dbReference>
<dbReference type="Pfam" id="PF02021">
    <property type="entry name" value="UPF0102"/>
    <property type="match status" value="1"/>
</dbReference>
<dbReference type="SUPFAM" id="SSF52980">
    <property type="entry name" value="Restriction endonuclease-like"/>
    <property type="match status" value="1"/>
</dbReference>
<sequence length="123" mass="14466">MSWFKQLWQNSREKGQYYELQAQKYLVSQGLTAIERNYYCPFGELDVIMKDGNTLVFVEVKFRKNHARGGANYALSIQKQARLKRSIYHYLAAKNLTNQPLRIDYVAITGEPSMHINWLKNVF</sequence>
<protein>
    <recommendedName>
        <fullName evidence="1">UPF0102 protein PSHAa2523</fullName>
    </recommendedName>
</protein>
<gene>
    <name type="ordered locus">PSHAa2523</name>
</gene>
<comment type="similarity">
    <text evidence="1">Belongs to the UPF0102 family.</text>
</comment>
<organism>
    <name type="scientific">Pseudoalteromonas translucida (strain TAC 125)</name>
    <dbReference type="NCBI Taxonomy" id="326442"/>
    <lineage>
        <taxon>Bacteria</taxon>
        <taxon>Pseudomonadati</taxon>
        <taxon>Pseudomonadota</taxon>
        <taxon>Gammaproteobacteria</taxon>
        <taxon>Alteromonadales</taxon>
        <taxon>Pseudoalteromonadaceae</taxon>
        <taxon>Pseudoalteromonas</taxon>
    </lineage>
</organism>
<proteinExistence type="inferred from homology"/>
<name>Y2523_PSET1</name>
<feature type="chain" id="PRO_0000336227" description="UPF0102 protein PSHAa2523">
    <location>
        <begin position="1"/>
        <end position="123"/>
    </location>
</feature>
<reference key="1">
    <citation type="journal article" date="2005" name="Genome Res.">
        <title>Coping with cold: the genome of the versatile marine Antarctica bacterium Pseudoalteromonas haloplanktis TAC125.</title>
        <authorList>
            <person name="Medigue C."/>
            <person name="Krin E."/>
            <person name="Pascal G."/>
            <person name="Barbe V."/>
            <person name="Bernsel A."/>
            <person name="Bertin P.N."/>
            <person name="Cheung F."/>
            <person name="Cruveiller S."/>
            <person name="D'Amico S."/>
            <person name="Duilio A."/>
            <person name="Fang G."/>
            <person name="Feller G."/>
            <person name="Ho C."/>
            <person name="Mangenot S."/>
            <person name="Marino G."/>
            <person name="Nilsson J."/>
            <person name="Parrilli E."/>
            <person name="Rocha E.P.C."/>
            <person name="Rouy Z."/>
            <person name="Sekowska A."/>
            <person name="Tutino M.L."/>
            <person name="Vallenet D."/>
            <person name="von Heijne G."/>
            <person name="Danchin A."/>
        </authorList>
    </citation>
    <scope>NUCLEOTIDE SEQUENCE [LARGE SCALE GENOMIC DNA]</scope>
    <source>
        <strain>TAC 125</strain>
    </source>
</reference>
<accession>Q3IG11</accession>
<keyword id="KW-1185">Reference proteome</keyword>